<dbReference type="EMBL" id="AP008229">
    <property type="protein sequence ID" value="BAE68453.1"/>
    <property type="molecule type" value="Genomic_DNA"/>
</dbReference>
<dbReference type="RefSeq" id="WP_011258549.1">
    <property type="nucleotide sequence ID" value="NC_007705.1"/>
</dbReference>
<dbReference type="SMR" id="Q2P4S4"/>
<dbReference type="KEGG" id="xom:XOO1698"/>
<dbReference type="HOGENOM" id="CLU_097408_2_2_6"/>
<dbReference type="GO" id="GO:0005829">
    <property type="term" value="C:cytosol"/>
    <property type="evidence" value="ECO:0007669"/>
    <property type="project" value="TreeGrafter"/>
</dbReference>
<dbReference type="GO" id="GO:0005960">
    <property type="term" value="C:glycine cleavage complex"/>
    <property type="evidence" value="ECO:0007669"/>
    <property type="project" value="InterPro"/>
</dbReference>
<dbReference type="GO" id="GO:0019464">
    <property type="term" value="P:glycine decarboxylation via glycine cleavage system"/>
    <property type="evidence" value="ECO:0007669"/>
    <property type="project" value="UniProtKB-UniRule"/>
</dbReference>
<dbReference type="CDD" id="cd06848">
    <property type="entry name" value="GCS_H"/>
    <property type="match status" value="1"/>
</dbReference>
<dbReference type="Gene3D" id="2.40.50.100">
    <property type="match status" value="1"/>
</dbReference>
<dbReference type="HAMAP" id="MF_00272">
    <property type="entry name" value="GcvH"/>
    <property type="match status" value="1"/>
</dbReference>
<dbReference type="InterPro" id="IPR003016">
    <property type="entry name" value="2-oxoA_DH_lipoyl-BS"/>
</dbReference>
<dbReference type="InterPro" id="IPR000089">
    <property type="entry name" value="Biotin_lipoyl"/>
</dbReference>
<dbReference type="InterPro" id="IPR002930">
    <property type="entry name" value="GCV_H"/>
</dbReference>
<dbReference type="InterPro" id="IPR033753">
    <property type="entry name" value="GCV_H/Fam206"/>
</dbReference>
<dbReference type="InterPro" id="IPR017453">
    <property type="entry name" value="GCV_H_sub"/>
</dbReference>
<dbReference type="InterPro" id="IPR011053">
    <property type="entry name" value="Single_hybrid_motif"/>
</dbReference>
<dbReference type="NCBIfam" id="TIGR00527">
    <property type="entry name" value="gcvH"/>
    <property type="match status" value="1"/>
</dbReference>
<dbReference type="NCBIfam" id="NF002270">
    <property type="entry name" value="PRK01202.1"/>
    <property type="match status" value="1"/>
</dbReference>
<dbReference type="PANTHER" id="PTHR11715">
    <property type="entry name" value="GLYCINE CLEAVAGE SYSTEM H PROTEIN"/>
    <property type="match status" value="1"/>
</dbReference>
<dbReference type="PANTHER" id="PTHR11715:SF3">
    <property type="entry name" value="GLYCINE CLEAVAGE SYSTEM H PROTEIN-RELATED"/>
    <property type="match status" value="1"/>
</dbReference>
<dbReference type="Pfam" id="PF01597">
    <property type="entry name" value="GCV_H"/>
    <property type="match status" value="1"/>
</dbReference>
<dbReference type="SUPFAM" id="SSF51230">
    <property type="entry name" value="Single hybrid motif"/>
    <property type="match status" value="1"/>
</dbReference>
<dbReference type="PROSITE" id="PS50968">
    <property type="entry name" value="BIOTINYL_LIPOYL"/>
    <property type="match status" value="1"/>
</dbReference>
<dbReference type="PROSITE" id="PS00189">
    <property type="entry name" value="LIPOYL"/>
    <property type="match status" value="1"/>
</dbReference>
<name>GCSH_XANOM</name>
<keyword id="KW-0450">Lipoyl</keyword>
<evidence type="ECO:0000255" key="1">
    <source>
        <dbReference type="HAMAP-Rule" id="MF_00272"/>
    </source>
</evidence>
<evidence type="ECO:0000255" key="2">
    <source>
        <dbReference type="PROSITE-ProRule" id="PRU01066"/>
    </source>
</evidence>
<organism>
    <name type="scientific">Xanthomonas oryzae pv. oryzae (strain MAFF 311018)</name>
    <dbReference type="NCBI Taxonomy" id="342109"/>
    <lineage>
        <taxon>Bacteria</taxon>
        <taxon>Pseudomonadati</taxon>
        <taxon>Pseudomonadota</taxon>
        <taxon>Gammaproteobacteria</taxon>
        <taxon>Lysobacterales</taxon>
        <taxon>Lysobacteraceae</taxon>
        <taxon>Xanthomonas</taxon>
    </lineage>
</organism>
<reference key="1">
    <citation type="journal article" date="2005" name="Jpn. Agric. Res. Q.">
        <title>Genome sequence of Xanthomonas oryzae pv. oryzae suggests contribution of large numbers of effector genes and insertion sequences to its race diversity.</title>
        <authorList>
            <person name="Ochiai H."/>
            <person name="Inoue Y."/>
            <person name="Takeya M."/>
            <person name="Sasaki A."/>
            <person name="Kaku H."/>
        </authorList>
    </citation>
    <scope>NUCLEOTIDE SEQUENCE [LARGE SCALE GENOMIC DNA]</scope>
    <source>
        <strain>MAFF 311018</strain>
    </source>
</reference>
<accession>Q2P4S4</accession>
<gene>
    <name evidence="1" type="primary">gcvH</name>
    <name type="ordered locus">XOO1698</name>
</gene>
<comment type="function">
    <text evidence="1">The glycine cleavage system catalyzes the degradation of glycine. The H protein shuttles the methylamine group of glycine from the P protein to the T protein.</text>
</comment>
<comment type="cofactor">
    <cofactor evidence="1">
        <name>(R)-lipoate</name>
        <dbReference type="ChEBI" id="CHEBI:83088"/>
    </cofactor>
    <text evidence="1">Binds 1 lipoyl cofactor covalently.</text>
</comment>
<comment type="subunit">
    <text evidence="1">The glycine cleavage system is composed of four proteins: P, T, L and H.</text>
</comment>
<comment type="similarity">
    <text evidence="1">Belongs to the GcvH family.</text>
</comment>
<feature type="chain" id="PRO_0000302465" description="Glycine cleavage system H protein">
    <location>
        <begin position="1"/>
        <end position="131"/>
    </location>
</feature>
<feature type="domain" description="Lipoyl-binding" evidence="2">
    <location>
        <begin position="24"/>
        <end position="106"/>
    </location>
</feature>
<feature type="modified residue" description="N6-lipoyllysine" evidence="1">
    <location>
        <position position="65"/>
    </location>
</feature>
<sequence>MSEIPGDLKFLKSHEWARIESNGRVTVGISDHAQGLLGDLVYVELPGVGDTVQVGNGAAVVESVKAASDVYSPVSGTVVEVNSALSDKPETINEDAYGEGWIFVVEIDDKEQLNDLLDPDDYAELLEDDEH</sequence>
<protein>
    <recommendedName>
        <fullName evidence="1">Glycine cleavage system H protein</fullName>
    </recommendedName>
</protein>
<proteinExistence type="inferred from homology"/>